<organism>
    <name type="scientific">Prochlorococcus marinus (strain NATL2A)</name>
    <dbReference type="NCBI Taxonomy" id="59920"/>
    <lineage>
        <taxon>Bacteria</taxon>
        <taxon>Bacillati</taxon>
        <taxon>Cyanobacteriota</taxon>
        <taxon>Cyanophyceae</taxon>
        <taxon>Synechococcales</taxon>
        <taxon>Prochlorococcaceae</taxon>
        <taxon>Prochlorococcus</taxon>
    </lineage>
</organism>
<evidence type="ECO:0000255" key="1">
    <source>
        <dbReference type="HAMAP-Rule" id="MF_00362"/>
    </source>
</evidence>
<evidence type="ECO:0000305" key="2"/>
<dbReference type="EMBL" id="CP000095">
    <property type="protein sequence ID" value="AAZ59057.1"/>
    <property type="molecule type" value="Genomic_DNA"/>
</dbReference>
<dbReference type="RefSeq" id="WP_011294202.1">
    <property type="nucleotide sequence ID" value="NC_007335.2"/>
</dbReference>
<dbReference type="SMR" id="Q46HH1"/>
<dbReference type="STRING" id="59920.PMN2A_1569"/>
<dbReference type="KEGG" id="pmn:PMN2A_1569"/>
<dbReference type="HOGENOM" id="CLU_092227_1_1_3"/>
<dbReference type="OrthoDB" id="9808307at2"/>
<dbReference type="PhylomeDB" id="Q46HH1"/>
<dbReference type="Proteomes" id="UP000002535">
    <property type="component" value="Chromosome"/>
</dbReference>
<dbReference type="GO" id="GO:0015934">
    <property type="term" value="C:large ribosomal subunit"/>
    <property type="evidence" value="ECO:0007669"/>
    <property type="project" value="InterPro"/>
</dbReference>
<dbReference type="GO" id="GO:0070180">
    <property type="term" value="F:large ribosomal subunit rRNA binding"/>
    <property type="evidence" value="ECO:0007669"/>
    <property type="project" value="UniProtKB-UniRule"/>
</dbReference>
<dbReference type="GO" id="GO:0003735">
    <property type="term" value="F:structural constituent of ribosome"/>
    <property type="evidence" value="ECO:0007669"/>
    <property type="project" value="InterPro"/>
</dbReference>
<dbReference type="GO" id="GO:0006412">
    <property type="term" value="P:translation"/>
    <property type="evidence" value="ECO:0007669"/>
    <property type="project" value="UniProtKB-UniRule"/>
</dbReference>
<dbReference type="CDD" id="cd05797">
    <property type="entry name" value="Ribosomal_L10"/>
    <property type="match status" value="1"/>
</dbReference>
<dbReference type="Gene3D" id="3.30.70.1730">
    <property type="match status" value="1"/>
</dbReference>
<dbReference type="Gene3D" id="6.10.250.290">
    <property type="match status" value="1"/>
</dbReference>
<dbReference type="HAMAP" id="MF_00362">
    <property type="entry name" value="Ribosomal_uL10"/>
    <property type="match status" value="1"/>
</dbReference>
<dbReference type="InterPro" id="IPR001790">
    <property type="entry name" value="Ribosomal_uL10"/>
</dbReference>
<dbReference type="InterPro" id="IPR043141">
    <property type="entry name" value="Ribosomal_uL10-like_sf"/>
</dbReference>
<dbReference type="InterPro" id="IPR022973">
    <property type="entry name" value="Ribosomal_uL10_bac"/>
</dbReference>
<dbReference type="InterPro" id="IPR047865">
    <property type="entry name" value="Ribosomal_uL10_bac_type"/>
</dbReference>
<dbReference type="InterPro" id="IPR002363">
    <property type="entry name" value="Ribosomal_uL10_CS_bac"/>
</dbReference>
<dbReference type="NCBIfam" id="NF000955">
    <property type="entry name" value="PRK00099.1-1"/>
    <property type="match status" value="1"/>
</dbReference>
<dbReference type="PANTHER" id="PTHR11560">
    <property type="entry name" value="39S RIBOSOMAL PROTEIN L10, MITOCHONDRIAL"/>
    <property type="match status" value="1"/>
</dbReference>
<dbReference type="Pfam" id="PF00466">
    <property type="entry name" value="Ribosomal_L10"/>
    <property type="match status" value="1"/>
</dbReference>
<dbReference type="SUPFAM" id="SSF160369">
    <property type="entry name" value="Ribosomal protein L10-like"/>
    <property type="match status" value="1"/>
</dbReference>
<dbReference type="PROSITE" id="PS01109">
    <property type="entry name" value="RIBOSOMAL_L10"/>
    <property type="match status" value="1"/>
</dbReference>
<feature type="chain" id="PRO_0000234871" description="Large ribosomal subunit protein uL10">
    <location>
        <begin position="1"/>
        <end position="175"/>
    </location>
</feature>
<protein>
    <recommendedName>
        <fullName evidence="1">Large ribosomal subunit protein uL10</fullName>
    </recommendedName>
    <alternativeName>
        <fullName evidence="2">50S ribosomal protein L10</fullName>
    </alternativeName>
</protein>
<sequence length="175" mass="18851">MGRTLESKKQIVKKIEDLLDNSEMALVLDYKGLSTKEMSDLRSRLQQSDGVCKVTKNTLMRQAIKGKNSWTGLDSLLTGTNAFVLIKGDVGSAVKAVQAFQKETQKSETKGGLFEGKLLSQDEIKAIAKLPSKEALMGQIAGALNSITSKIAIGINEVPSGLARSLKQHSENGES</sequence>
<keyword id="KW-1185">Reference proteome</keyword>
<keyword id="KW-0687">Ribonucleoprotein</keyword>
<keyword id="KW-0689">Ribosomal protein</keyword>
<keyword id="KW-0694">RNA-binding</keyword>
<keyword id="KW-0699">rRNA-binding</keyword>
<accession>Q46HH1</accession>
<comment type="function">
    <text evidence="1">Forms part of the ribosomal stalk, playing a central role in the interaction of the ribosome with GTP-bound translation factors.</text>
</comment>
<comment type="subunit">
    <text evidence="1">Part of the ribosomal stalk of the 50S ribosomal subunit. The N-terminus interacts with L11 and the large rRNA to form the base of the stalk. The C-terminus forms an elongated spine to which L12 dimers bind in a sequential fashion forming a multimeric L10(L12)X complex.</text>
</comment>
<comment type="similarity">
    <text evidence="1">Belongs to the universal ribosomal protein uL10 family.</text>
</comment>
<gene>
    <name evidence="1" type="primary">rplJ</name>
    <name evidence="1" type="synonym">rpl10</name>
    <name type="ordered locus">PMN2A_1569</name>
</gene>
<proteinExistence type="inferred from homology"/>
<reference key="1">
    <citation type="journal article" date="2007" name="PLoS Genet.">
        <title>Patterns and implications of gene gain and loss in the evolution of Prochlorococcus.</title>
        <authorList>
            <person name="Kettler G.C."/>
            <person name="Martiny A.C."/>
            <person name="Huang K."/>
            <person name="Zucker J."/>
            <person name="Coleman M.L."/>
            <person name="Rodrigue S."/>
            <person name="Chen F."/>
            <person name="Lapidus A."/>
            <person name="Ferriera S."/>
            <person name="Johnson J."/>
            <person name="Steglich C."/>
            <person name="Church G.M."/>
            <person name="Richardson P."/>
            <person name="Chisholm S.W."/>
        </authorList>
    </citation>
    <scope>NUCLEOTIDE SEQUENCE [LARGE SCALE GENOMIC DNA]</scope>
    <source>
        <strain>NATL2A</strain>
    </source>
</reference>
<name>RL10_PROMT</name>